<protein>
    <recommendedName>
        <fullName>Glutamate-1-semialdehyde 2,1-aminomutase, chloroplastic</fullName>
        <shortName>GSA</shortName>
        <ecNumber>5.4.3.8</ecNumber>
    </recommendedName>
    <alternativeName>
        <fullName>Glutamate-1-semialdehyde aminotransferase</fullName>
        <shortName>GSA-AT</shortName>
    </alternativeName>
</protein>
<keyword id="KW-0149">Chlorophyll biosynthesis</keyword>
<keyword id="KW-0150">Chloroplast</keyword>
<keyword id="KW-0413">Isomerase</keyword>
<keyword id="KW-0934">Plastid</keyword>
<keyword id="KW-0627">Porphyrin biosynthesis</keyword>
<keyword id="KW-0663">Pyridoxal phosphate</keyword>
<keyword id="KW-0809">Transit peptide</keyword>
<proteinExistence type="evidence at transcript level"/>
<name>GSA_CHLRE</name>
<reference key="1">
    <citation type="journal article" date="1994" name="Plant Mol. Biol.">
        <title>Structure and light-regulated expression of the gsa gene encoding the chlorophyll biosynthetic enzyme, glutamate 1-semialdehyde aminotransferase, in Chlamydomonas reinhardtii.</title>
        <authorList>
            <person name="Matters G.L."/>
            <person name="Beale S.I."/>
        </authorList>
    </citation>
    <scope>NUCLEOTIDE SEQUENCE [MRNA]</scope>
    <source>
        <strain>NO-</strain>
    </source>
</reference>
<comment type="catalytic activity">
    <reaction>
        <text>(S)-4-amino-5-oxopentanoate = 5-aminolevulinate</text>
        <dbReference type="Rhea" id="RHEA:14265"/>
        <dbReference type="ChEBI" id="CHEBI:57501"/>
        <dbReference type="ChEBI" id="CHEBI:356416"/>
        <dbReference type="EC" id="5.4.3.8"/>
    </reaction>
</comment>
<comment type="cofactor">
    <cofactor>
        <name>pyridoxal 5'-phosphate</name>
        <dbReference type="ChEBI" id="CHEBI:597326"/>
    </cofactor>
</comment>
<comment type="pathway">
    <text>Porphyrin-containing compound metabolism; protoporphyrin-IX biosynthesis; 5-aminolevulinate from L-glutamyl-tRNA(Glu): step 2/2.</text>
</comment>
<comment type="pathway">
    <text>Porphyrin-containing compound metabolism; chlorophyll biosynthesis.</text>
</comment>
<comment type="subunit">
    <text evidence="1">Homodimer.</text>
</comment>
<comment type="subcellular location">
    <subcellularLocation>
        <location>Plastid</location>
        <location>Chloroplast</location>
    </subcellularLocation>
</comment>
<comment type="similarity">
    <text evidence="3">Belongs to the class-III pyridoxal-phosphate-dependent aminotransferase family. HemL subfamily.</text>
</comment>
<gene>
    <name type="primary">GSA</name>
</gene>
<dbReference type="EC" id="5.4.3.8"/>
<dbReference type="EMBL" id="U03632">
    <property type="protein sequence ID" value="AAA18861.1"/>
    <property type="molecule type" value="mRNA"/>
</dbReference>
<dbReference type="EMBL" id="U03633">
    <property type="protein sequence ID" value="AAA18862.1"/>
    <property type="molecule type" value="Unassigned_DNA"/>
</dbReference>
<dbReference type="PIR" id="S43787">
    <property type="entry name" value="S43787"/>
</dbReference>
<dbReference type="RefSeq" id="XP_001697519.1">
    <property type="nucleotide sequence ID" value="XM_001697467.1"/>
</dbReference>
<dbReference type="SMR" id="Q39566"/>
<dbReference type="PaxDb" id="3055-EDP00181"/>
<dbReference type="ProMEX" id="Q39566"/>
<dbReference type="EnsemblPlants" id="PNW84771">
    <property type="protein sequence ID" value="PNW84771"/>
    <property type="gene ID" value="CHLRE_03g158000v5"/>
</dbReference>
<dbReference type="Gramene" id="PNW84771">
    <property type="protein sequence ID" value="PNW84771"/>
    <property type="gene ID" value="CHLRE_03g158000v5"/>
</dbReference>
<dbReference type="KEGG" id="cre:CHLRE_03g158000v5"/>
<dbReference type="eggNOG" id="KOG1401">
    <property type="taxonomic scope" value="Eukaryota"/>
</dbReference>
<dbReference type="HOGENOM" id="CLU_016922_1_5_1"/>
<dbReference type="OMA" id="WGPLIFG"/>
<dbReference type="OrthoDB" id="425114at2759"/>
<dbReference type="UniPathway" id="UPA00251">
    <property type="reaction ID" value="UER00317"/>
</dbReference>
<dbReference type="UniPathway" id="UPA00668"/>
<dbReference type="GO" id="GO:0009507">
    <property type="term" value="C:chloroplast"/>
    <property type="evidence" value="ECO:0007669"/>
    <property type="project" value="UniProtKB-SubCell"/>
</dbReference>
<dbReference type="GO" id="GO:0042286">
    <property type="term" value="F:glutamate-1-semialdehyde 2,1-aminomutase activity"/>
    <property type="evidence" value="ECO:0007669"/>
    <property type="project" value="UniProtKB-EC"/>
</dbReference>
<dbReference type="GO" id="GO:0030170">
    <property type="term" value="F:pyridoxal phosphate binding"/>
    <property type="evidence" value="ECO:0007669"/>
    <property type="project" value="InterPro"/>
</dbReference>
<dbReference type="GO" id="GO:0008483">
    <property type="term" value="F:transaminase activity"/>
    <property type="evidence" value="ECO:0007669"/>
    <property type="project" value="InterPro"/>
</dbReference>
<dbReference type="GO" id="GO:0015995">
    <property type="term" value="P:chlorophyll biosynthetic process"/>
    <property type="evidence" value="ECO:0007669"/>
    <property type="project" value="UniProtKB-UniPathway"/>
</dbReference>
<dbReference type="GO" id="GO:0006782">
    <property type="term" value="P:protoporphyrinogen IX biosynthetic process"/>
    <property type="evidence" value="ECO:0007669"/>
    <property type="project" value="UniProtKB-UniPathway"/>
</dbReference>
<dbReference type="CDD" id="cd00610">
    <property type="entry name" value="OAT_like"/>
    <property type="match status" value="1"/>
</dbReference>
<dbReference type="FunFam" id="3.40.640.10:FF:000021">
    <property type="entry name" value="Glutamate-1-semialdehyde 2,1-aminomutase"/>
    <property type="match status" value="1"/>
</dbReference>
<dbReference type="FunFam" id="3.90.1150.10:FF:000012">
    <property type="entry name" value="Glutamate-1-semialdehyde 2,1-aminomutase"/>
    <property type="match status" value="1"/>
</dbReference>
<dbReference type="Gene3D" id="3.90.1150.10">
    <property type="entry name" value="Aspartate Aminotransferase, domain 1"/>
    <property type="match status" value="1"/>
</dbReference>
<dbReference type="Gene3D" id="3.40.640.10">
    <property type="entry name" value="Type I PLP-dependent aspartate aminotransferase-like (Major domain)"/>
    <property type="match status" value="1"/>
</dbReference>
<dbReference type="HAMAP" id="MF_00375">
    <property type="entry name" value="HemL_aminotrans_3"/>
    <property type="match status" value="1"/>
</dbReference>
<dbReference type="InterPro" id="IPR004639">
    <property type="entry name" value="4pyrrol_synth_GluAld_NH2Trfase"/>
</dbReference>
<dbReference type="InterPro" id="IPR005814">
    <property type="entry name" value="Aminotrans_3"/>
</dbReference>
<dbReference type="InterPro" id="IPR049704">
    <property type="entry name" value="Aminotrans_3_PPA_site"/>
</dbReference>
<dbReference type="InterPro" id="IPR015424">
    <property type="entry name" value="PyrdxlP-dep_Trfase"/>
</dbReference>
<dbReference type="InterPro" id="IPR015421">
    <property type="entry name" value="PyrdxlP-dep_Trfase_major"/>
</dbReference>
<dbReference type="InterPro" id="IPR015422">
    <property type="entry name" value="PyrdxlP-dep_Trfase_small"/>
</dbReference>
<dbReference type="NCBIfam" id="TIGR00713">
    <property type="entry name" value="hemL"/>
    <property type="match status" value="1"/>
</dbReference>
<dbReference type="NCBIfam" id="NF000818">
    <property type="entry name" value="PRK00062.1"/>
    <property type="match status" value="1"/>
</dbReference>
<dbReference type="PANTHER" id="PTHR43713">
    <property type="entry name" value="GLUTAMATE-1-SEMIALDEHYDE 2,1-AMINOMUTASE"/>
    <property type="match status" value="1"/>
</dbReference>
<dbReference type="PANTHER" id="PTHR43713:SF3">
    <property type="entry name" value="GLUTAMATE-1-SEMIALDEHYDE 2,1-AMINOMUTASE 1, CHLOROPLASTIC-RELATED"/>
    <property type="match status" value="1"/>
</dbReference>
<dbReference type="Pfam" id="PF00202">
    <property type="entry name" value="Aminotran_3"/>
    <property type="match status" value="1"/>
</dbReference>
<dbReference type="SUPFAM" id="SSF53383">
    <property type="entry name" value="PLP-dependent transferases"/>
    <property type="match status" value="1"/>
</dbReference>
<dbReference type="PROSITE" id="PS00600">
    <property type="entry name" value="AA_TRANSFER_CLASS_3"/>
    <property type="match status" value="1"/>
</dbReference>
<evidence type="ECO:0000250" key="1"/>
<evidence type="ECO:0000255" key="2"/>
<evidence type="ECO:0000305" key="3"/>
<accession>Q39566</accession>
<accession>Q39567</accession>
<sequence>MQMQLNAKTVQGAFKAQRPRSVRGNVAVRAVAAPPKLVTKRSEEIFKEAQELLPGGVNSPVRAFRSVGGGPIVFDRVKGAYCWDVDGNKYIDYVGSWGPAICGHGNDEVNNALKAQIDKGTSFGAPCELENVLAKMVIDRVPSVEMVRFVSSGTEACLSVLRLMRAYTGREKVLKFTGCYHGHADSFLVKAGSGVITLGLPDSPGVPKSTAAATLTATYNNLDSVRELFAANKGEIAGVILEPVVGNSGFIVPTKEFLQGLREICTAEGAVLCFDEVMTGFRIAKGCAQEHFGITPDLTTMGKVIGGGMPVGAYGGKKEIMKMVAPAGPMYQAGTLSGNPMAMTAGIKTLEILGRPGAYEHLEKVTKRLIDGIMAAAKEHSHEITGGNISGMFGFFFCKGPVTCFEDALAADTAKFARFHRGMLEEGVYLAPSQFEAGFTSLAHSEADVDATIAAARRVFARI</sequence>
<feature type="transit peptide" description="Chloroplast" evidence="2">
    <location>
        <begin position="1"/>
        <end position="30"/>
    </location>
</feature>
<feature type="chain" id="PRO_0000001257" description="Glutamate-1-semialdehyde 2,1-aminomutase, chloroplastic">
    <location>
        <begin position="31"/>
        <end position="463"/>
    </location>
</feature>
<feature type="modified residue" description="N6-(pyridoxal phosphate)lysine" evidence="1">
    <location>
        <position position="303"/>
    </location>
</feature>
<organism>
    <name type="scientific">Chlamydomonas reinhardtii</name>
    <name type="common">Chlamydomonas smithii</name>
    <dbReference type="NCBI Taxonomy" id="3055"/>
    <lineage>
        <taxon>Eukaryota</taxon>
        <taxon>Viridiplantae</taxon>
        <taxon>Chlorophyta</taxon>
        <taxon>core chlorophytes</taxon>
        <taxon>Chlorophyceae</taxon>
        <taxon>CS clade</taxon>
        <taxon>Chlamydomonadales</taxon>
        <taxon>Chlamydomonadaceae</taxon>
        <taxon>Chlamydomonas</taxon>
    </lineage>
</organism>